<feature type="chain" id="PRO_1000049624" description="Large ribosomal subunit protein bL19">
    <location>
        <begin position="1"/>
        <end position="122"/>
    </location>
</feature>
<dbReference type="EMBL" id="CP000521">
    <property type="protein sequence ID" value="ABO13558.1"/>
    <property type="molecule type" value="Genomic_DNA"/>
</dbReference>
<dbReference type="RefSeq" id="WP_000014562.1">
    <property type="nucleotide sequence ID" value="NZ_CP053098.1"/>
</dbReference>
<dbReference type="SMR" id="A3M9G4"/>
<dbReference type="GeneID" id="92895396"/>
<dbReference type="KEGG" id="acb:A1S_3161"/>
<dbReference type="HOGENOM" id="CLU_103507_2_2_6"/>
<dbReference type="GO" id="GO:0022625">
    <property type="term" value="C:cytosolic large ribosomal subunit"/>
    <property type="evidence" value="ECO:0007669"/>
    <property type="project" value="TreeGrafter"/>
</dbReference>
<dbReference type="GO" id="GO:0003735">
    <property type="term" value="F:structural constituent of ribosome"/>
    <property type="evidence" value="ECO:0007669"/>
    <property type="project" value="InterPro"/>
</dbReference>
<dbReference type="GO" id="GO:0006412">
    <property type="term" value="P:translation"/>
    <property type="evidence" value="ECO:0007669"/>
    <property type="project" value="UniProtKB-UniRule"/>
</dbReference>
<dbReference type="FunFam" id="2.30.30.790:FF:000001">
    <property type="entry name" value="50S ribosomal protein L19"/>
    <property type="match status" value="1"/>
</dbReference>
<dbReference type="Gene3D" id="2.30.30.790">
    <property type="match status" value="1"/>
</dbReference>
<dbReference type="HAMAP" id="MF_00402">
    <property type="entry name" value="Ribosomal_bL19"/>
    <property type="match status" value="1"/>
</dbReference>
<dbReference type="InterPro" id="IPR001857">
    <property type="entry name" value="Ribosomal_bL19"/>
</dbReference>
<dbReference type="InterPro" id="IPR018257">
    <property type="entry name" value="Ribosomal_bL19_CS"/>
</dbReference>
<dbReference type="InterPro" id="IPR038657">
    <property type="entry name" value="Ribosomal_bL19_sf"/>
</dbReference>
<dbReference type="InterPro" id="IPR008991">
    <property type="entry name" value="Translation_prot_SH3-like_sf"/>
</dbReference>
<dbReference type="NCBIfam" id="TIGR01024">
    <property type="entry name" value="rplS_bact"/>
    <property type="match status" value="1"/>
</dbReference>
<dbReference type="PANTHER" id="PTHR15680:SF9">
    <property type="entry name" value="LARGE RIBOSOMAL SUBUNIT PROTEIN BL19M"/>
    <property type="match status" value="1"/>
</dbReference>
<dbReference type="PANTHER" id="PTHR15680">
    <property type="entry name" value="RIBOSOMAL PROTEIN L19"/>
    <property type="match status" value="1"/>
</dbReference>
<dbReference type="Pfam" id="PF01245">
    <property type="entry name" value="Ribosomal_L19"/>
    <property type="match status" value="1"/>
</dbReference>
<dbReference type="PIRSF" id="PIRSF002191">
    <property type="entry name" value="Ribosomal_L19"/>
    <property type="match status" value="1"/>
</dbReference>
<dbReference type="PRINTS" id="PR00061">
    <property type="entry name" value="RIBOSOMALL19"/>
</dbReference>
<dbReference type="SUPFAM" id="SSF50104">
    <property type="entry name" value="Translation proteins SH3-like domain"/>
    <property type="match status" value="1"/>
</dbReference>
<dbReference type="PROSITE" id="PS01015">
    <property type="entry name" value="RIBOSOMAL_L19"/>
    <property type="match status" value="1"/>
</dbReference>
<name>RL19_ACIBT</name>
<evidence type="ECO:0000255" key="1">
    <source>
        <dbReference type="HAMAP-Rule" id="MF_00402"/>
    </source>
</evidence>
<evidence type="ECO:0000305" key="2"/>
<accession>A3M9G4</accession>
<keyword id="KW-0687">Ribonucleoprotein</keyword>
<keyword id="KW-0689">Ribosomal protein</keyword>
<comment type="function">
    <text evidence="1">This protein is located at the 30S-50S ribosomal subunit interface and may play a role in the structure and function of the aminoacyl-tRNA binding site.</text>
</comment>
<comment type="similarity">
    <text evidence="1">Belongs to the bacterial ribosomal protein bL19 family.</text>
</comment>
<protein>
    <recommendedName>
        <fullName evidence="1">Large ribosomal subunit protein bL19</fullName>
    </recommendedName>
    <alternativeName>
        <fullName evidence="2">50S ribosomal protein L19</fullName>
    </alternativeName>
</protein>
<reference key="1">
    <citation type="journal article" date="2007" name="Genes Dev.">
        <title>New insights into Acinetobacter baumannii pathogenesis revealed by high-density pyrosequencing and transposon mutagenesis.</title>
        <authorList>
            <person name="Smith M.G."/>
            <person name="Gianoulis T.A."/>
            <person name="Pukatzki S."/>
            <person name="Mekalanos J.J."/>
            <person name="Ornston L.N."/>
            <person name="Gerstein M."/>
            <person name="Snyder M."/>
        </authorList>
    </citation>
    <scope>NUCLEOTIDE SEQUENCE [LARGE SCALE GENOMIC DNA]</scope>
    <source>
        <strain>ATCC 17978 / DSM 105126 / CIP 53.77 / LMG 1025 / NCDC KC755 / 5377</strain>
    </source>
</reference>
<organism>
    <name type="scientific">Acinetobacter baumannii (strain ATCC 17978 / DSM 105126 / CIP 53.77 / LMG 1025 / NCDC KC755 / 5377)</name>
    <dbReference type="NCBI Taxonomy" id="400667"/>
    <lineage>
        <taxon>Bacteria</taxon>
        <taxon>Pseudomonadati</taxon>
        <taxon>Pseudomonadota</taxon>
        <taxon>Gammaproteobacteria</taxon>
        <taxon>Moraxellales</taxon>
        <taxon>Moraxellaceae</taxon>
        <taxon>Acinetobacter</taxon>
        <taxon>Acinetobacter calcoaceticus/baumannii complex</taxon>
    </lineage>
</organism>
<proteinExistence type="inferred from homology"/>
<sequence length="122" mass="13592">MSGKHPLVQAIENSQLKTDLPEFAPGDTVVVQVKVKEGDRERLQAFEGVVIAKKNRGLNSAFTVRKISSGVGVERVFQTHSPVVAKIEVKRRGDVRRAKLYYLRDLSGKAARIREKLPARKA</sequence>
<gene>
    <name evidence="1" type="primary">rplS</name>
    <name type="ordered locus">A1S_3161</name>
</gene>